<gene>
    <name evidence="1" type="primary">rpsS</name>
    <name type="ordered locus">ABO_0401</name>
</gene>
<feature type="chain" id="PRO_0000265321" description="Small ribosomal subunit protein uS19">
    <location>
        <begin position="1"/>
        <end position="91"/>
    </location>
</feature>
<protein>
    <recommendedName>
        <fullName evidence="1">Small ribosomal subunit protein uS19</fullName>
    </recommendedName>
    <alternativeName>
        <fullName evidence="2">30S ribosomal protein S19</fullName>
    </alternativeName>
</protein>
<comment type="function">
    <text evidence="1">Protein S19 forms a complex with S13 that binds strongly to the 16S ribosomal RNA.</text>
</comment>
<comment type="similarity">
    <text evidence="1">Belongs to the universal ribosomal protein uS19 family.</text>
</comment>
<organism>
    <name type="scientific">Alcanivorax borkumensis (strain ATCC 700651 / DSM 11573 / NCIMB 13689 / SK2)</name>
    <dbReference type="NCBI Taxonomy" id="393595"/>
    <lineage>
        <taxon>Bacteria</taxon>
        <taxon>Pseudomonadati</taxon>
        <taxon>Pseudomonadota</taxon>
        <taxon>Gammaproteobacteria</taxon>
        <taxon>Oceanospirillales</taxon>
        <taxon>Alcanivoracaceae</taxon>
        <taxon>Alcanivorax</taxon>
    </lineage>
</organism>
<proteinExistence type="inferred from homology"/>
<keyword id="KW-1185">Reference proteome</keyword>
<keyword id="KW-0687">Ribonucleoprotein</keyword>
<keyword id="KW-0689">Ribosomal protein</keyword>
<keyword id="KW-0694">RNA-binding</keyword>
<keyword id="KW-0699">rRNA-binding</keyword>
<name>RS19_ALCBS</name>
<dbReference type="EMBL" id="AM286690">
    <property type="protein sequence ID" value="CAL15849.1"/>
    <property type="molecule type" value="Genomic_DNA"/>
</dbReference>
<dbReference type="RefSeq" id="WP_007151633.1">
    <property type="nucleotide sequence ID" value="NC_008260.1"/>
</dbReference>
<dbReference type="SMR" id="Q0VSJ9"/>
<dbReference type="STRING" id="393595.ABO_0401"/>
<dbReference type="KEGG" id="abo:ABO_0401"/>
<dbReference type="eggNOG" id="COG0185">
    <property type="taxonomic scope" value="Bacteria"/>
</dbReference>
<dbReference type="HOGENOM" id="CLU_144911_0_1_6"/>
<dbReference type="OrthoDB" id="9797833at2"/>
<dbReference type="Proteomes" id="UP000008871">
    <property type="component" value="Chromosome"/>
</dbReference>
<dbReference type="GO" id="GO:0005737">
    <property type="term" value="C:cytoplasm"/>
    <property type="evidence" value="ECO:0007669"/>
    <property type="project" value="UniProtKB-ARBA"/>
</dbReference>
<dbReference type="GO" id="GO:0015935">
    <property type="term" value="C:small ribosomal subunit"/>
    <property type="evidence" value="ECO:0007669"/>
    <property type="project" value="InterPro"/>
</dbReference>
<dbReference type="GO" id="GO:0019843">
    <property type="term" value="F:rRNA binding"/>
    <property type="evidence" value="ECO:0007669"/>
    <property type="project" value="UniProtKB-UniRule"/>
</dbReference>
<dbReference type="GO" id="GO:0003735">
    <property type="term" value="F:structural constituent of ribosome"/>
    <property type="evidence" value="ECO:0007669"/>
    <property type="project" value="InterPro"/>
</dbReference>
<dbReference type="GO" id="GO:0000028">
    <property type="term" value="P:ribosomal small subunit assembly"/>
    <property type="evidence" value="ECO:0007669"/>
    <property type="project" value="TreeGrafter"/>
</dbReference>
<dbReference type="GO" id="GO:0006412">
    <property type="term" value="P:translation"/>
    <property type="evidence" value="ECO:0007669"/>
    <property type="project" value="UniProtKB-UniRule"/>
</dbReference>
<dbReference type="FunFam" id="3.30.860.10:FF:000001">
    <property type="entry name" value="30S ribosomal protein S19"/>
    <property type="match status" value="1"/>
</dbReference>
<dbReference type="Gene3D" id="3.30.860.10">
    <property type="entry name" value="30s Ribosomal Protein S19, Chain A"/>
    <property type="match status" value="1"/>
</dbReference>
<dbReference type="HAMAP" id="MF_00531">
    <property type="entry name" value="Ribosomal_uS19"/>
    <property type="match status" value="1"/>
</dbReference>
<dbReference type="InterPro" id="IPR002222">
    <property type="entry name" value="Ribosomal_uS19"/>
</dbReference>
<dbReference type="InterPro" id="IPR005732">
    <property type="entry name" value="Ribosomal_uS19_bac-type"/>
</dbReference>
<dbReference type="InterPro" id="IPR020934">
    <property type="entry name" value="Ribosomal_uS19_CS"/>
</dbReference>
<dbReference type="InterPro" id="IPR023575">
    <property type="entry name" value="Ribosomal_uS19_SF"/>
</dbReference>
<dbReference type="NCBIfam" id="TIGR01050">
    <property type="entry name" value="rpsS_bact"/>
    <property type="match status" value="1"/>
</dbReference>
<dbReference type="PANTHER" id="PTHR11880">
    <property type="entry name" value="RIBOSOMAL PROTEIN S19P FAMILY MEMBER"/>
    <property type="match status" value="1"/>
</dbReference>
<dbReference type="PANTHER" id="PTHR11880:SF8">
    <property type="entry name" value="SMALL RIBOSOMAL SUBUNIT PROTEIN US19M"/>
    <property type="match status" value="1"/>
</dbReference>
<dbReference type="Pfam" id="PF00203">
    <property type="entry name" value="Ribosomal_S19"/>
    <property type="match status" value="1"/>
</dbReference>
<dbReference type="PIRSF" id="PIRSF002144">
    <property type="entry name" value="Ribosomal_S19"/>
    <property type="match status" value="1"/>
</dbReference>
<dbReference type="PRINTS" id="PR00975">
    <property type="entry name" value="RIBOSOMALS19"/>
</dbReference>
<dbReference type="SUPFAM" id="SSF54570">
    <property type="entry name" value="Ribosomal protein S19"/>
    <property type="match status" value="1"/>
</dbReference>
<dbReference type="PROSITE" id="PS00323">
    <property type="entry name" value="RIBOSOMAL_S19"/>
    <property type="match status" value="1"/>
</dbReference>
<reference key="1">
    <citation type="journal article" date="2006" name="Nat. Biotechnol.">
        <title>Genome sequence of the ubiquitous hydrocarbon-degrading marine bacterium Alcanivorax borkumensis.</title>
        <authorList>
            <person name="Schneiker S."/>
            <person name="Martins dos Santos V.A.P."/>
            <person name="Bartels D."/>
            <person name="Bekel T."/>
            <person name="Brecht M."/>
            <person name="Buhrmester J."/>
            <person name="Chernikova T.N."/>
            <person name="Denaro R."/>
            <person name="Ferrer M."/>
            <person name="Gertler C."/>
            <person name="Goesmann A."/>
            <person name="Golyshina O.V."/>
            <person name="Kaminski F."/>
            <person name="Khachane A.N."/>
            <person name="Lang S."/>
            <person name="Linke B."/>
            <person name="McHardy A.C."/>
            <person name="Meyer F."/>
            <person name="Nechitaylo T."/>
            <person name="Puehler A."/>
            <person name="Regenhardt D."/>
            <person name="Rupp O."/>
            <person name="Sabirova J.S."/>
            <person name="Selbitschka W."/>
            <person name="Yakimov M.M."/>
            <person name="Timmis K.N."/>
            <person name="Vorhoelter F.-J."/>
            <person name="Weidner S."/>
            <person name="Kaiser O."/>
            <person name="Golyshin P.N."/>
        </authorList>
    </citation>
    <scope>NUCLEOTIDE SEQUENCE [LARGE SCALE GENOMIC DNA]</scope>
    <source>
        <strain>ATCC 700651 / DSM 11573 / NCIMB 13689 / SK2</strain>
    </source>
</reference>
<evidence type="ECO:0000255" key="1">
    <source>
        <dbReference type="HAMAP-Rule" id="MF_00531"/>
    </source>
</evidence>
<evidence type="ECO:0000305" key="2"/>
<accession>Q0VSJ9</accession>
<sequence>MPRSLKKGPFVDHHLLGKVEDAVEAGSRKPIKTWSRRSMIIPEMVGLTIAVYNGKQHVPVMVSEHMVGHKLGEFALTRNYRGHAVDKKAKR</sequence>